<evidence type="ECO:0000255" key="1">
    <source>
        <dbReference type="HAMAP-Rule" id="MF_00735"/>
    </source>
</evidence>
<keyword id="KW-0963">Cytoplasm</keyword>
<keyword id="KW-0489">Methyltransferase</keyword>
<keyword id="KW-0949">S-adenosyl-L-methionine</keyword>
<keyword id="KW-0808">Transferase</keyword>
<comment type="function">
    <text evidence="1">Methylates ribosomal protein L11.</text>
</comment>
<comment type="catalytic activity">
    <reaction evidence="1">
        <text>L-lysyl-[protein] + 3 S-adenosyl-L-methionine = N(6),N(6),N(6)-trimethyl-L-lysyl-[protein] + 3 S-adenosyl-L-homocysteine + 3 H(+)</text>
        <dbReference type="Rhea" id="RHEA:54192"/>
        <dbReference type="Rhea" id="RHEA-COMP:9752"/>
        <dbReference type="Rhea" id="RHEA-COMP:13826"/>
        <dbReference type="ChEBI" id="CHEBI:15378"/>
        <dbReference type="ChEBI" id="CHEBI:29969"/>
        <dbReference type="ChEBI" id="CHEBI:57856"/>
        <dbReference type="ChEBI" id="CHEBI:59789"/>
        <dbReference type="ChEBI" id="CHEBI:61961"/>
    </reaction>
</comment>
<comment type="subcellular location">
    <subcellularLocation>
        <location evidence="1">Cytoplasm</location>
    </subcellularLocation>
</comment>
<comment type="similarity">
    <text evidence="1">Belongs to the methyltransferase superfamily. PrmA family.</text>
</comment>
<gene>
    <name evidence="1" type="primary">prmA</name>
    <name type="ordered locus">VIBHAR_00173</name>
</gene>
<dbReference type="EC" id="2.1.1.-" evidence="1"/>
<dbReference type="EMBL" id="CP000789">
    <property type="protein sequence ID" value="ABU69221.1"/>
    <property type="molecule type" value="Genomic_DNA"/>
</dbReference>
<dbReference type="RefSeq" id="WP_012126521.1">
    <property type="nucleotide sequence ID" value="NC_009783.1"/>
</dbReference>
<dbReference type="SMR" id="A7MXI3"/>
<dbReference type="KEGG" id="vha:VIBHAR_00173"/>
<dbReference type="PATRIC" id="fig|338187.25.peg.2360"/>
<dbReference type="Proteomes" id="UP000008152">
    <property type="component" value="Chromosome I"/>
</dbReference>
<dbReference type="GO" id="GO:0005829">
    <property type="term" value="C:cytosol"/>
    <property type="evidence" value="ECO:0007669"/>
    <property type="project" value="TreeGrafter"/>
</dbReference>
<dbReference type="GO" id="GO:0016279">
    <property type="term" value="F:protein-lysine N-methyltransferase activity"/>
    <property type="evidence" value="ECO:0007669"/>
    <property type="project" value="TreeGrafter"/>
</dbReference>
<dbReference type="GO" id="GO:0032259">
    <property type="term" value="P:methylation"/>
    <property type="evidence" value="ECO:0007669"/>
    <property type="project" value="UniProtKB-KW"/>
</dbReference>
<dbReference type="CDD" id="cd02440">
    <property type="entry name" value="AdoMet_MTases"/>
    <property type="match status" value="1"/>
</dbReference>
<dbReference type="Gene3D" id="3.40.50.150">
    <property type="entry name" value="Vaccinia Virus protein VP39"/>
    <property type="match status" value="1"/>
</dbReference>
<dbReference type="HAMAP" id="MF_00735">
    <property type="entry name" value="Methyltr_PrmA"/>
    <property type="match status" value="1"/>
</dbReference>
<dbReference type="InterPro" id="IPR050078">
    <property type="entry name" value="Ribosomal_L11_MeTrfase_PrmA"/>
</dbReference>
<dbReference type="InterPro" id="IPR004498">
    <property type="entry name" value="Ribosomal_PrmA_MeTrfase"/>
</dbReference>
<dbReference type="InterPro" id="IPR029063">
    <property type="entry name" value="SAM-dependent_MTases_sf"/>
</dbReference>
<dbReference type="NCBIfam" id="TIGR00406">
    <property type="entry name" value="prmA"/>
    <property type="match status" value="1"/>
</dbReference>
<dbReference type="PANTHER" id="PTHR43648">
    <property type="entry name" value="ELECTRON TRANSFER FLAVOPROTEIN BETA SUBUNIT LYSINE METHYLTRANSFERASE"/>
    <property type="match status" value="1"/>
</dbReference>
<dbReference type="PANTHER" id="PTHR43648:SF1">
    <property type="entry name" value="ELECTRON TRANSFER FLAVOPROTEIN BETA SUBUNIT LYSINE METHYLTRANSFERASE"/>
    <property type="match status" value="1"/>
</dbReference>
<dbReference type="Pfam" id="PF06325">
    <property type="entry name" value="PrmA"/>
    <property type="match status" value="1"/>
</dbReference>
<dbReference type="PIRSF" id="PIRSF000401">
    <property type="entry name" value="RPL11_MTase"/>
    <property type="match status" value="1"/>
</dbReference>
<dbReference type="SUPFAM" id="SSF53335">
    <property type="entry name" value="S-adenosyl-L-methionine-dependent methyltransferases"/>
    <property type="match status" value="1"/>
</dbReference>
<name>PRMA_VIBC1</name>
<accession>A7MXI3</accession>
<sequence length="295" mass="32568">MPWIQIKLNATNENAEQIGDMLMEETGALSVTFLDAQDTPVFEPLPGETRLWGDTDILALYDAEADTNFIITQIKASNMLADDFAYKVEQLEDKDWEREWMENFHPMKFGERLWICPSWREIPEPDAVNVMLDPGLAFGTGTHPTTALCLEWLESLDLSGKTVIDFGCGSGILAIAAIKLGAEKVIGIDIDPQALQASRDNAERNGVANQLEVFLPQNQPEGLIADVVVANILAGPLRELAPIIKSLVKPNGDLAMSGVLDTQAEDVANHYRDELHIDPIAEQSEWCRISGRKQG</sequence>
<proteinExistence type="inferred from homology"/>
<reference key="1">
    <citation type="submission" date="2007-08" db="EMBL/GenBank/DDBJ databases">
        <authorList>
            <consortium name="The Vibrio harveyi Genome Sequencing Project"/>
            <person name="Bassler B."/>
            <person name="Clifton S.W."/>
            <person name="Fulton L."/>
            <person name="Delehaunty K."/>
            <person name="Fronick C."/>
            <person name="Harrison M."/>
            <person name="Markivic C."/>
            <person name="Fulton R."/>
            <person name="Tin-Wollam A.-M."/>
            <person name="Shah N."/>
            <person name="Pepin K."/>
            <person name="Nash W."/>
            <person name="Thiruvilangam P."/>
            <person name="Bhonagiri V."/>
            <person name="Waters C."/>
            <person name="Tu K.C."/>
            <person name="Irgon J."/>
            <person name="Wilson R.K."/>
        </authorList>
    </citation>
    <scope>NUCLEOTIDE SEQUENCE [LARGE SCALE GENOMIC DNA]</scope>
    <source>
        <strain>ATCC BAA-1116 / BB120</strain>
    </source>
</reference>
<protein>
    <recommendedName>
        <fullName evidence="1">Ribosomal protein L11 methyltransferase</fullName>
        <shortName evidence="1">L11 Mtase</shortName>
        <ecNumber evidence="1">2.1.1.-</ecNumber>
    </recommendedName>
</protein>
<feature type="chain" id="PRO_1000046121" description="Ribosomal protein L11 methyltransferase">
    <location>
        <begin position="1"/>
        <end position="295"/>
    </location>
</feature>
<feature type="binding site" evidence="1">
    <location>
        <position position="146"/>
    </location>
    <ligand>
        <name>S-adenosyl-L-methionine</name>
        <dbReference type="ChEBI" id="CHEBI:59789"/>
    </ligand>
</feature>
<feature type="binding site" evidence="1">
    <location>
        <position position="167"/>
    </location>
    <ligand>
        <name>S-adenosyl-L-methionine</name>
        <dbReference type="ChEBI" id="CHEBI:59789"/>
    </ligand>
</feature>
<feature type="binding site" evidence="1">
    <location>
        <position position="189"/>
    </location>
    <ligand>
        <name>S-adenosyl-L-methionine</name>
        <dbReference type="ChEBI" id="CHEBI:59789"/>
    </ligand>
</feature>
<feature type="binding site" evidence="1">
    <location>
        <position position="231"/>
    </location>
    <ligand>
        <name>S-adenosyl-L-methionine</name>
        <dbReference type="ChEBI" id="CHEBI:59789"/>
    </ligand>
</feature>
<organism>
    <name type="scientific">Vibrio campbellii (strain ATCC BAA-1116)</name>
    <dbReference type="NCBI Taxonomy" id="2902295"/>
    <lineage>
        <taxon>Bacteria</taxon>
        <taxon>Pseudomonadati</taxon>
        <taxon>Pseudomonadota</taxon>
        <taxon>Gammaproteobacteria</taxon>
        <taxon>Vibrionales</taxon>
        <taxon>Vibrionaceae</taxon>
        <taxon>Vibrio</taxon>
    </lineage>
</organism>